<proteinExistence type="evidence at protein level"/>
<name>S35B4_HUMAN</name>
<sequence length="331" mass="37424">MRPALAVGLVFAGCCSNVIFLELLARKHPGCGNIVTFAQFLFIAVEGFLFEADLGRKPPAIPIRYYAIMVTMFFTVSVVNNYALNLNIAMPLHMIFRSGSLIANMILGIIILKKRYSIFKYTSIALVSVGIFICTFMSAKQVTSQSSLSENDGFQAFVWWLLGIGALTFALLMSARMGIFQETLYKRFGKHSKEALFYNHALPLPGFVFLASDIYDHAVLFNKSELYEIPVIGVTLPIMWFYLLMNIITQYVCIRGVFILTTECASLTVTLVVTLRKFVSLIFSILYFQNPFTLWHWLGTLFVFIGTLMYTEVWNNLGTTKSEPQKDSKKN</sequence>
<keyword id="KW-0025">Alternative splicing</keyword>
<keyword id="KW-0256">Endoplasmic reticulum</keyword>
<keyword id="KW-0472">Membrane</keyword>
<keyword id="KW-1267">Proteomics identification</keyword>
<keyword id="KW-1185">Reference proteome</keyword>
<keyword id="KW-0762">Sugar transport</keyword>
<keyword id="KW-0812">Transmembrane</keyword>
<keyword id="KW-1133">Transmembrane helix</keyword>
<keyword id="KW-0813">Transport</keyword>
<dbReference type="EMBL" id="AJ971941">
    <property type="protein sequence ID" value="CAI98963.1"/>
    <property type="molecule type" value="mRNA"/>
</dbReference>
<dbReference type="EMBL" id="AB052892">
    <property type="protein sequence ID" value="BAB61040.1"/>
    <property type="molecule type" value="mRNA"/>
</dbReference>
<dbReference type="EMBL" id="AJ315497">
    <property type="protein sequence ID" value="CAC84567.1"/>
    <property type="molecule type" value="mRNA"/>
</dbReference>
<dbReference type="EMBL" id="AJ315498">
    <property type="protein sequence ID" value="CAC84568.1"/>
    <property type="molecule type" value="mRNA"/>
</dbReference>
<dbReference type="EMBL" id="AK027603">
    <property type="protein sequence ID" value="BAB55225.1"/>
    <property type="molecule type" value="mRNA"/>
</dbReference>
<dbReference type="EMBL" id="AK027726">
    <property type="protein sequence ID" value="BAB55325.1"/>
    <property type="status" value="ALT_INIT"/>
    <property type="molecule type" value="mRNA"/>
</dbReference>
<dbReference type="EMBL" id="AK075368">
    <property type="protein sequence ID" value="BAC11573.1"/>
    <property type="molecule type" value="mRNA"/>
</dbReference>
<dbReference type="EMBL" id="AK222874">
    <property type="protein sequence ID" value="BAD96594.1"/>
    <property type="molecule type" value="mRNA"/>
</dbReference>
<dbReference type="EMBL" id="AC008154">
    <property type="status" value="NOT_ANNOTATED_CDS"/>
    <property type="molecule type" value="Genomic_DNA"/>
</dbReference>
<dbReference type="EMBL" id="CH236950">
    <property type="protein sequence ID" value="EAL24071.1"/>
    <property type="molecule type" value="Genomic_DNA"/>
</dbReference>
<dbReference type="EMBL" id="CH471070">
    <property type="protein sequence ID" value="EAW83810.1"/>
    <property type="molecule type" value="Genomic_DNA"/>
</dbReference>
<dbReference type="EMBL" id="BC008413">
    <property type="protein sequence ID" value="AAH08413.1"/>
    <property type="molecule type" value="mRNA"/>
</dbReference>
<dbReference type="CCDS" id="CCDS34756.1">
    <molecule id="Q969S0-1"/>
</dbReference>
<dbReference type="RefSeq" id="NP_116215.1">
    <molecule id="Q969S0-1"/>
    <property type="nucleotide sequence ID" value="NM_032826.5"/>
</dbReference>
<dbReference type="BioGRID" id="124349">
    <property type="interactions" value="40"/>
</dbReference>
<dbReference type="FunCoup" id="Q969S0">
    <property type="interactions" value="1867"/>
</dbReference>
<dbReference type="IntAct" id="Q969S0">
    <property type="interactions" value="34"/>
</dbReference>
<dbReference type="MINT" id="Q969S0"/>
<dbReference type="STRING" id="9606.ENSP00000367770"/>
<dbReference type="TCDB" id="2.A.7.10.2">
    <property type="family name" value="the drug/metabolite transporter (dmt) superfamily"/>
</dbReference>
<dbReference type="iPTMnet" id="Q969S0"/>
<dbReference type="PhosphoSitePlus" id="Q969S0"/>
<dbReference type="SwissPalm" id="Q969S0"/>
<dbReference type="BioMuta" id="SLC35B4"/>
<dbReference type="DMDM" id="74751727"/>
<dbReference type="jPOST" id="Q969S0"/>
<dbReference type="MassIVE" id="Q969S0"/>
<dbReference type="PaxDb" id="9606-ENSP00000367770"/>
<dbReference type="PeptideAtlas" id="Q969S0"/>
<dbReference type="ProteomicsDB" id="75824">
    <molecule id="Q969S0-1"/>
</dbReference>
<dbReference type="ProteomicsDB" id="75825">
    <molecule id="Q969S0-2"/>
</dbReference>
<dbReference type="ProteomicsDB" id="75826">
    <molecule id="Q969S0-3"/>
</dbReference>
<dbReference type="Antibodypedia" id="53731">
    <property type="antibodies" value="35 antibodies from 12 providers"/>
</dbReference>
<dbReference type="DNASU" id="84912"/>
<dbReference type="Ensembl" id="ENST00000378509.9">
    <molecule id="Q969S0-1"/>
    <property type="protein sequence ID" value="ENSP00000367770.4"/>
    <property type="gene ID" value="ENSG00000205060.11"/>
</dbReference>
<dbReference type="Ensembl" id="ENST00000470969.2">
    <molecule id="Q969S0-2"/>
    <property type="protein sequence ID" value="ENSP00000485857.1"/>
    <property type="gene ID" value="ENSG00000205060.11"/>
</dbReference>
<dbReference type="GeneID" id="84912"/>
<dbReference type="KEGG" id="hsa:84912"/>
<dbReference type="MANE-Select" id="ENST00000378509.9">
    <property type="protein sequence ID" value="ENSP00000367770.4"/>
    <property type="RefSeq nucleotide sequence ID" value="NM_032826.5"/>
    <property type="RefSeq protein sequence ID" value="NP_116215.1"/>
</dbReference>
<dbReference type="UCSC" id="uc003vrn.4">
    <molecule id="Q969S0-1"/>
    <property type="organism name" value="human"/>
</dbReference>
<dbReference type="AGR" id="HGNC:20584"/>
<dbReference type="CTD" id="84912"/>
<dbReference type="DisGeNET" id="84912"/>
<dbReference type="GeneCards" id="SLC35B4"/>
<dbReference type="HGNC" id="HGNC:20584">
    <property type="gene designation" value="SLC35B4"/>
</dbReference>
<dbReference type="HPA" id="ENSG00000205060">
    <property type="expression patterns" value="Low tissue specificity"/>
</dbReference>
<dbReference type="MIM" id="610923">
    <property type="type" value="gene"/>
</dbReference>
<dbReference type="neXtProt" id="NX_Q969S0"/>
<dbReference type="OpenTargets" id="ENSG00000205060"/>
<dbReference type="PharmGKB" id="PA134922110"/>
<dbReference type="VEuPathDB" id="HostDB:ENSG00000205060"/>
<dbReference type="eggNOG" id="KOG1583">
    <property type="taxonomic scope" value="Eukaryota"/>
</dbReference>
<dbReference type="GeneTree" id="ENSGT00390000002915"/>
<dbReference type="HOGENOM" id="CLU_033007_1_0_1"/>
<dbReference type="InParanoid" id="Q969S0"/>
<dbReference type="OMA" id="NPFTGWH"/>
<dbReference type="OrthoDB" id="999962at2759"/>
<dbReference type="PAN-GO" id="Q969S0">
    <property type="GO annotations" value="4 GO annotations based on evolutionary models"/>
</dbReference>
<dbReference type="PhylomeDB" id="Q969S0"/>
<dbReference type="TreeFam" id="TF312926"/>
<dbReference type="PathwayCommons" id="Q969S0"/>
<dbReference type="Reactome" id="R-HSA-727802">
    <property type="pathway name" value="Transport of nucleotide sugars"/>
</dbReference>
<dbReference type="SignaLink" id="Q969S0"/>
<dbReference type="BioGRID-ORCS" id="84912">
    <property type="hits" value="7 hits in 1151 CRISPR screens"/>
</dbReference>
<dbReference type="ChiTaRS" id="SLC35B4">
    <property type="organism name" value="human"/>
</dbReference>
<dbReference type="GeneWiki" id="SLC35B4"/>
<dbReference type="GenomeRNAi" id="84912"/>
<dbReference type="Pharos" id="Q969S0">
    <property type="development level" value="Tbio"/>
</dbReference>
<dbReference type="PRO" id="PR:Q969S0"/>
<dbReference type="Proteomes" id="UP000005640">
    <property type="component" value="Chromosome 7"/>
</dbReference>
<dbReference type="RNAct" id="Q969S0">
    <property type="molecule type" value="protein"/>
</dbReference>
<dbReference type="Bgee" id="ENSG00000205060">
    <property type="expression patterns" value="Expressed in cerebellar vermis and 175 other cell types or tissues"/>
</dbReference>
<dbReference type="ExpressionAtlas" id="Q969S0">
    <property type="expression patterns" value="baseline and differential"/>
</dbReference>
<dbReference type="GO" id="GO:0005783">
    <property type="term" value="C:endoplasmic reticulum"/>
    <property type="evidence" value="ECO:0000314"/>
    <property type="project" value="CACAO"/>
</dbReference>
<dbReference type="GO" id="GO:0005789">
    <property type="term" value="C:endoplasmic reticulum membrane"/>
    <property type="evidence" value="ECO:0000318"/>
    <property type="project" value="GO_Central"/>
</dbReference>
<dbReference type="GO" id="GO:0000139">
    <property type="term" value="C:Golgi membrane"/>
    <property type="evidence" value="ECO:0000318"/>
    <property type="project" value="GO_Central"/>
</dbReference>
<dbReference type="GO" id="GO:0005462">
    <property type="term" value="F:UDP-N-acetylglucosamine transmembrane transporter activity"/>
    <property type="evidence" value="ECO:0000314"/>
    <property type="project" value="UniProtKB"/>
</dbReference>
<dbReference type="GO" id="GO:0005464">
    <property type="term" value="F:UDP-xylose transmembrane transporter activity"/>
    <property type="evidence" value="ECO:0000314"/>
    <property type="project" value="UniProtKB"/>
</dbReference>
<dbReference type="GO" id="GO:0006111">
    <property type="term" value="P:regulation of gluconeogenesis"/>
    <property type="evidence" value="ECO:0007669"/>
    <property type="project" value="Ensembl"/>
</dbReference>
<dbReference type="GO" id="GO:1990569">
    <property type="term" value="P:UDP-N-acetylglucosamine transmembrane transport"/>
    <property type="evidence" value="ECO:0000314"/>
    <property type="project" value="UniProtKB"/>
</dbReference>
<dbReference type="GO" id="GO:0015790">
    <property type="term" value="P:UDP-xylose transmembrane transport"/>
    <property type="evidence" value="ECO:0000314"/>
    <property type="project" value="UniProtKB"/>
</dbReference>
<dbReference type="InterPro" id="IPR013657">
    <property type="entry name" value="SCL35B1-4/HUT1"/>
</dbReference>
<dbReference type="PANTHER" id="PTHR10778:SF4">
    <property type="entry name" value="NUCLEOTIDE SUGAR TRANSPORTER SLC35B4"/>
    <property type="match status" value="1"/>
</dbReference>
<dbReference type="PANTHER" id="PTHR10778">
    <property type="entry name" value="SOLUTE CARRIER FAMILY 35 MEMBER B"/>
    <property type="match status" value="1"/>
</dbReference>
<dbReference type="Pfam" id="PF08449">
    <property type="entry name" value="UAA"/>
    <property type="match status" value="1"/>
</dbReference>
<evidence type="ECO:0000255" key="1"/>
<evidence type="ECO:0000269" key="2">
    <source>
    </source>
</evidence>
<evidence type="ECO:0000269" key="3">
    <source>
    </source>
</evidence>
<evidence type="ECO:0000269" key="4">
    <source>
    </source>
</evidence>
<evidence type="ECO:0000303" key="5">
    <source>
    </source>
</evidence>
<evidence type="ECO:0000303" key="6">
    <source ref="2"/>
</evidence>
<evidence type="ECO:0000305" key="7"/>
<evidence type="ECO:0000305" key="8">
    <source>
    </source>
</evidence>
<evidence type="ECO:0000305" key="9">
    <source>
    </source>
</evidence>
<feature type="chain" id="PRO_0000213385" description="Nucleotide sugar transporter SLC35B4">
    <location>
        <begin position="1"/>
        <end position="331"/>
    </location>
</feature>
<feature type="transmembrane region" description="Helical" evidence="1">
    <location>
        <begin position="4"/>
        <end position="24"/>
    </location>
</feature>
<feature type="transmembrane region" description="Helical" evidence="1">
    <location>
        <begin position="30"/>
        <end position="50"/>
    </location>
</feature>
<feature type="transmembrane region" description="Helical" evidence="1">
    <location>
        <begin position="59"/>
        <end position="79"/>
    </location>
</feature>
<feature type="transmembrane region" description="Helical" evidence="1">
    <location>
        <begin position="92"/>
        <end position="112"/>
    </location>
</feature>
<feature type="transmembrane region" description="Helical" evidence="1">
    <location>
        <begin position="117"/>
        <end position="137"/>
    </location>
</feature>
<feature type="transmembrane region" description="Helical" evidence="1">
    <location>
        <begin position="153"/>
        <end position="173"/>
    </location>
</feature>
<feature type="transmembrane region" description="Helical" evidence="1">
    <location>
        <begin position="201"/>
        <end position="221"/>
    </location>
</feature>
<feature type="transmembrane region" description="Helical" evidence="1">
    <location>
        <begin position="229"/>
        <end position="249"/>
    </location>
</feature>
<feature type="transmembrane region" description="Helical" evidence="1">
    <location>
        <begin position="251"/>
        <end position="267"/>
    </location>
</feature>
<feature type="transmembrane region" description="Helical" evidence="1">
    <location>
        <begin position="268"/>
        <end position="288"/>
    </location>
</feature>
<feature type="transmembrane region" description="Helical" evidence="1">
    <location>
        <begin position="291"/>
        <end position="311"/>
    </location>
</feature>
<feature type="short sequence motif" description="Mediates endoplasmic reticulum retention" evidence="4">
    <location>
        <begin position="326"/>
        <end position="331"/>
    </location>
</feature>
<feature type="splice variant" id="VSP_016197" description="In isoform 2." evidence="6">
    <original>ELYEIPV</original>
    <variation>GEFGVRQ</variation>
    <location>
        <begin position="225"/>
        <end position="231"/>
    </location>
</feature>
<feature type="splice variant" id="VSP_016198" description="In isoform 2." evidence="6">
    <location>
        <begin position="232"/>
        <end position="331"/>
    </location>
</feature>
<feature type="splice variant" id="VSP_016199" description="In isoform 3." evidence="5">
    <original>YVC</original>
    <variation>TPT</variation>
    <location>
        <begin position="251"/>
        <end position="253"/>
    </location>
</feature>
<feature type="splice variant" id="VSP_016200" description="In isoform 3." evidence="5">
    <location>
        <begin position="254"/>
        <end position="331"/>
    </location>
</feature>
<feature type="mutagenesis site" description="Results in loss of ER retention signal and relocalization at the Golgi apparatus." evidence="4">
    <original>K</original>
    <variation>A</variation>
    <location>
        <position position="329"/>
    </location>
</feature>
<feature type="mutagenesis site" description="Results in loss of ER retention signal and relocalization at the Golgi apparatus." evidence="4">
    <original>K</original>
    <variation>A</variation>
    <location>
        <position position="330"/>
    </location>
</feature>
<feature type="sequence conflict" description="In Ref. 6; BAD96594." evidence="7" ref="6">
    <original>L</original>
    <variation>P</variation>
    <location>
        <position position="21"/>
    </location>
</feature>
<feature type="sequence conflict" description="In Ref. 6; BAD96594." evidence="7" ref="6">
    <original>F</original>
    <variation>S</variation>
    <location>
        <position position="119"/>
    </location>
</feature>
<feature type="sequence conflict" description="In Ref. 6; BAD96594." evidence="7" ref="6">
    <original>I</original>
    <variation>M</variation>
    <location>
        <position position="179"/>
    </location>
</feature>
<feature type="sequence conflict" description="In Ref. 6; BAD96594." evidence="7" ref="6">
    <original>P</original>
    <variation>S</variation>
    <location>
        <position position="205"/>
    </location>
</feature>
<accession>Q969S0</accession>
<accession>A4D1P3</accession>
<accession>A6NNS4</accession>
<accession>Q53GQ7</accession>
<accession>Q8TCU7</accession>
<accession>Q96K33</accession>
<comment type="function">
    <text evidence="3 8">Antiporter that transports nucleotide sugars across the endoplasmic reticulum (ER) membrane in exchange for another nucleotide sugar. May couple UDP-alpha-D-glucuronate (UDP-GlcA) or UDP-alpha-D-xylose (UDP-Xyl) efflux to UDP-alpha-D-glucuronate (UDP-GlcA) influx into the ER lumen, which in turn stimulates glucuronidation and excretion of endobiotics and xenobiotics.</text>
</comment>
<comment type="function">
    <molecule>Isoform 1</molecule>
    <text evidence="3">Has UDP-GlcA:UDP-GlcNAc antiporter activity.</text>
</comment>
<comment type="function">
    <molecule>Isoform 2</molecule>
    <text evidence="3">Has UDP-GlcA:UDP-GlcNAc antiporter activity.</text>
</comment>
<comment type="catalytic activity">
    <molecule>Isoform 1</molecule>
    <reaction evidence="3 8">
        <text>UDP-N-acetyl-alpha-D-glucosamine(in) + UDP-alpha-D-glucuronate(out) = UDP-N-acetyl-alpha-D-glucosamine(out) + UDP-alpha-D-glucuronate(in)</text>
        <dbReference type="Rhea" id="RHEA:73703"/>
        <dbReference type="ChEBI" id="CHEBI:57705"/>
        <dbReference type="ChEBI" id="CHEBI:58052"/>
    </reaction>
    <physiologicalReaction direction="left-to-right" evidence="8 9">
        <dbReference type="Rhea" id="RHEA:73704"/>
    </physiologicalReaction>
</comment>
<comment type="catalytic activity">
    <molecule>Isoform 1</molecule>
    <reaction evidence="8">
        <text>UDP-alpha-D-xylose(in) + UDP-alpha-D-glucuronate(out) = UDP-alpha-D-xylose(out) + UDP-alpha-D-glucuronate(in)</text>
        <dbReference type="Rhea" id="RHEA:74831"/>
        <dbReference type="ChEBI" id="CHEBI:57632"/>
        <dbReference type="ChEBI" id="CHEBI:58052"/>
    </reaction>
    <physiologicalReaction direction="left-to-right" evidence="8">
        <dbReference type="Rhea" id="RHEA:74832"/>
    </physiologicalReaction>
</comment>
<comment type="catalytic activity">
    <molecule>Isoform 2</molecule>
    <reaction evidence="3">
        <text>UDP-N-acetyl-alpha-D-glucosamine(in) + UDP-alpha-D-glucuronate(out) = UDP-N-acetyl-alpha-D-glucosamine(out) + UDP-alpha-D-glucuronate(in)</text>
        <dbReference type="Rhea" id="RHEA:73703"/>
        <dbReference type="ChEBI" id="CHEBI:57705"/>
        <dbReference type="ChEBI" id="CHEBI:58052"/>
    </reaction>
    <physiologicalReaction direction="left-to-right" evidence="9">
        <dbReference type="Rhea" id="RHEA:73704"/>
    </physiologicalReaction>
</comment>
<comment type="interaction">
    <interactant intactId="EBI-10281213">
        <id>Q969S0</id>
    </interactant>
    <interactant intactId="EBI-13059134">
        <id>Q13520</id>
        <label>AQP6</label>
    </interactant>
    <organismsDiffer>false</organismsDiffer>
    <experiments>3</experiments>
</comment>
<comment type="interaction">
    <interactant intactId="EBI-10281213">
        <id>Q969S0</id>
    </interactant>
    <interactant intactId="EBI-7797864">
        <id>P11912</id>
        <label>CD79A</label>
    </interactant>
    <organismsDiffer>false</organismsDiffer>
    <experiments>3</experiments>
</comment>
<comment type="interaction">
    <interactant intactId="EBI-10281213">
        <id>Q969S0</id>
    </interactant>
    <interactant intactId="EBI-1045797">
        <id>Q8N5K1</id>
        <label>CISD2</label>
    </interactant>
    <organismsDiffer>false</organismsDiffer>
    <experiments>3</experiments>
</comment>
<comment type="interaction">
    <interactant intactId="EBI-10281213">
        <id>Q969S0</id>
    </interactant>
    <interactant intactId="EBI-18400628">
        <id>O00501</id>
        <label>CLDN5</label>
    </interactant>
    <organismsDiffer>false</organismsDiffer>
    <experiments>3</experiments>
</comment>
<comment type="interaction">
    <interactant intactId="EBI-10281213">
        <id>Q969S0</id>
    </interactant>
    <interactant intactId="EBI-18013275">
        <id>Q7Z7G2</id>
        <label>CPLX4</label>
    </interactant>
    <organismsDiffer>false</organismsDiffer>
    <experiments>3</experiments>
</comment>
<comment type="interaction">
    <interactant intactId="EBI-10281213">
        <id>Q969S0</id>
    </interactant>
    <interactant intactId="EBI-6942903">
        <id>Q96BA8</id>
        <label>CREB3L1</label>
    </interactant>
    <organismsDiffer>false</organismsDiffer>
    <experiments>8</experiments>
</comment>
<comment type="interaction">
    <interactant intactId="EBI-10281213">
        <id>Q969S0</id>
    </interactant>
    <interactant intactId="EBI-8787095">
        <id>O00559</id>
        <label>EBAG9</label>
    </interactant>
    <organismsDiffer>false</organismsDiffer>
    <experiments>3</experiments>
</comment>
<comment type="interaction">
    <interactant intactId="EBI-10281213">
        <id>Q969S0</id>
    </interactant>
    <interactant intactId="EBI-781551">
        <id>Q9Y282</id>
        <label>ERGIC3</label>
    </interactant>
    <organismsDiffer>false</organismsDiffer>
    <experiments>3</experiments>
</comment>
<comment type="interaction">
    <interactant intactId="EBI-10281213">
        <id>Q969S0</id>
    </interactant>
    <interactant intactId="EBI-946830">
        <id>P30040</id>
        <label>ERP29</label>
    </interactant>
    <organismsDiffer>false</organismsDiffer>
    <experiments>3</experiments>
</comment>
<comment type="interaction">
    <interactant intactId="EBI-10281213">
        <id>Q969S0</id>
    </interactant>
    <interactant intactId="EBI-18304435">
        <id>Q5JX71</id>
        <label>FAM209A</label>
    </interactant>
    <organismsDiffer>false</organismsDiffer>
    <experiments>3</experiments>
</comment>
<comment type="interaction">
    <interactant intactId="EBI-10281213">
        <id>Q969S0</id>
    </interactant>
    <interactant intactId="EBI-18938272">
        <id>Q96KR6</id>
        <label>FAM210B</label>
    </interactant>
    <organismsDiffer>false</organismsDiffer>
    <experiments>3</experiments>
</comment>
<comment type="interaction">
    <interactant intactId="EBI-10281213">
        <id>Q969S0</id>
    </interactant>
    <interactant intactId="EBI-2833872">
        <id>O15552</id>
        <label>FFAR2</label>
    </interactant>
    <organismsDiffer>false</organismsDiffer>
    <experiments>3</experiments>
</comment>
<comment type="interaction">
    <interactant intactId="EBI-10281213">
        <id>Q969S0</id>
    </interactant>
    <interactant intactId="EBI-13345167">
        <id>Q8TDT2</id>
        <label>GPR152</label>
    </interactant>
    <organismsDiffer>false</organismsDiffer>
    <experiments>3</experiments>
</comment>
<comment type="interaction">
    <interactant intactId="EBI-10281213">
        <id>Q969S0</id>
    </interactant>
    <interactant intactId="EBI-11721746">
        <id>Q8TED1</id>
        <label>GPX8</label>
    </interactant>
    <organismsDiffer>false</organismsDiffer>
    <experiments>3</experiments>
</comment>
<comment type="interaction">
    <interactant intactId="EBI-10281213">
        <id>Q969S0</id>
    </interactant>
    <interactant intactId="EBI-18053395">
        <id>Q7Z5P4</id>
        <label>HSD17B13</label>
    </interactant>
    <organismsDiffer>false</organismsDiffer>
    <experiments>3</experiments>
</comment>
<comment type="interaction">
    <interactant intactId="EBI-10281213">
        <id>Q969S0</id>
    </interactant>
    <interactant intactId="EBI-749265">
        <id>Q8N6L0</id>
        <label>KASH5</label>
    </interactant>
    <organismsDiffer>false</organismsDiffer>
    <experiments>3</experiments>
</comment>
<comment type="interaction">
    <interactant intactId="EBI-10281213">
        <id>Q969S0</id>
    </interactant>
    <interactant intactId="EBI-2820517">
        <id>Q8TAF8</id>
        <label>LHFPL5</label>
    </interactant>
    <organismsDiffer>false</organismsDiffer>
    <experiments>3</experiments>
</comment>
<comment type="interaction">
    <interactant intactId="EBI-10281213">
        <id>Q969S0</id>
    </interactant>
    <interactant intactId="EBI-6163737">
        <id>Q8N4V1</id>
        <label>MMGT1</label>
    </interactant>
    <organismsDiffer>false</organismsDiffer>
    <experiments>3</experiments>
</comment>
<comment type="interaction">
    <interactant intactId="EBI-10281213">
        <id>Q969S0</id>
    </interactant>
    <interactant intactId="EBI-17263240">
        <id>P15941-11</id>
        <label>MUC1</label>
    </interactant>
    <organismsDiffer>false</organismsDiffer>
    <experiments>3</experiments>
</comment>
<comment type="interaction">
    <interactant intactId="EBI-10281213">
        <id>Q969S0</id>
    </interactant>
    <interactant intactId="EBI-716063">
        <id>Q13113</id>
        <label>PDZK1IP1</label>
    </interactant>
    <organismsDiffer>false</organismsDiffer>
    <experiments>3</experiments>
</comment>
<comment type="interaction">
    <interactant intactId="EBI-10281213">
        <id>Q969S0</id>
    </interactant>
    <interactant intactId="EBI-3919694">
        <id>P15151</id>
        <label>PVR</label>
    </interactant>
    <organismsDiffer>false</organismsDiffer>
    <experiments>3</experiments>
</comment>
<comment type="interaction">
    <interactant intactId="EBI-10281213">
        <id>Q969S0</id>
    </interactant>
    <interactant intactId="EBI-12908426">
        <id>Q9NX52-3</id>
        <label>RHBDL2</label>
    </interactant>
    <organismsDiffer>false</organismsDiffer>
    <experiments>3</experiments>
</comment>
<comment type="interaction">
    <interactant intactId="EBI-10281213">
        <id>Q969S0</id>
    </interactant>
    <interactant intactId="EBI-12823227">
        <id>Q6ZMJ2-2</id>
        <label>SCARA5</label>
    </interactant>
    <organismsDiffer>false</organismsDiffer>
    <experiments>3</experiments>
</comment>
<comment type="interaction">
    <interactant intactId="EBI-10281213">
        <id>Q969S0</id>
    </interactant>
    <interactant intactId="EBI-17595455">
        <id>P54219-3</id>
        <label>SLC18A1</label>
    </interactant>
    <organismsDiffer>false</organismsDiffer>
    <experiments>3</experiments>
</comment>
<comment type="interaction">
    <interactant intactId="EBI-10281213">
        <id>Q969S0</id>
    </interactant>
    <interactant intactId="EBI-1211440">
        <id>P27105</id>
        <label>STOM</label>
    </interactant>
    <organismsDiffer>false</organismsDiffer>
    <experiments>3</experiments>
</comment>
<comment type="interaction">
    <interactant intactId="EBI-10281213">
        <id>Q969S0</id>
    </interactant>
    <interactant intactId="EBI-18271435">
        <id>Q0VAB0</id>
        <label>TBXA2R</label>
    </interactant>
    <organismsDiffer>false</organismsDiffer>
    <experiments>3</experiments>
</comment>
<comment type="interaction">
    <interactant intactId="EBI-10281213">
        <id>Q969S0</id>
    </interactant>
    <interactant intactId="EBI-19763514">
        <id>Q8N3G9</id>
        <label>TMEM130</label>
    </interactant>
    <organismsDiffer>false</organismsDiffer>
    <experiments>3</experiments>
</comment>
<comment type="interaction">
    <interactant intactId="EBI-10281213">
        <id>Q969S0</id>
    </interactant>
    <interactant intactId="EBI-10982110">
        <id>Q96Q45-2</id>
        <label>TMEM237</label>
    </interactant>
    <organismsDiffer>false</organismsDiffer>
    <experiments>3</experiments>
</comment>
<comment type="interaction">
    <interactant intactId="EBI-10281213">
        <id>Q969S0</id>
    </interactant>
    <interactant intactId="EBI-18178701">
        <id>Q4KMG9</id>
        <label>TMEM52B</label>
    </interactant>
    <organismsDiffer>false</organismsDiffer>
    <experiments>3</experiments>
</comment>
<comment type="interaction">
    <interactant intactId="EBI-10281213">
        <id>Q969S0</id>
    </interactant>
    <interactant intactId="EBI-2214794">
        <id>O43914</id>
        <label>TYROBP</label>
    </interactant>
    <organismsDiffer>false</organismsDiffer>
    <experiments>3</experiments>
</comment>
<comment type="interaction">
    <interactant intactId="EBI-10281213">
        <id>Q969S0</id>
    </interactant>
    <interactant intactId="EBI-744988">
        <id>Q9H7M9</id>
        <label>VSIR</label>
    </interactant>
    <organismsDiffer>false</organismsDiffer>
    <experiments>3</experiments>
</comment>
<comment type="subcellular location">
    <subcellularLocation>
        <location evidence="4">Endoplasmic reticulum membrane</location>
        <topology evidence="1">Multi-pass membrane protein</topology>
    </subcellularLocation>
</comment>
<comment type="alternative products">
    <event type="alternative splicing"/>
    <isoform>
        <id>Q969S0-1</id>
        <name>1</name>
        <sequence type="displayed"/>
    </isoform>
    <isoform>
        <id>Q969S0-2</id>
        <name>2</name>
        <sequence type="described" ref="VSP_016197 VSP_016198"/>
    </isoform>
    <isoform>
        <id>Q969S0-3</id>
        <name>3</name>
        <sequence type="described" ref="VSP_016199 VSP_016200"/>
    </isoform>
</comment>
<comment type="similarity">
    <text evidence="7">Belongs to the nucleotide-sugar transporter family. SLC35B subfamily.</text>
</comment>
<comment type="caution">
    <text evidence="2 4">It was initially reported to localize to the Golgi apparatus, but this was later found to be artifactual mislocalization due to C-terminal tagging interfering with the ER retention signal.</text>
</comment>
<comment type="sequence caution" evidence="7">
    <conflict type="erroneous initiation">
        <sequence resource="EMBL-CDS" id="BAB55325"/>
    </conflict>
    <text>Truncated N-terminus.</text>
</comment>
<reference key="1">
    <citation type="journal article" date="2005" name="J. Biol. Chem.">
        <title>The human solute carrier gene SLC35B4 encodes a bifunctional nucleotide sugar transporter with specificity for UDP-xylose and UDP-N-acetylglucosamine.</title>
        <authorList>
            <person name="Ashikov A."/>
            <person name="Routier F."/>
            <person name="Fuhlrott J."/>
            <person name="Helmus Y."/>
            <person name="Wild M."/>
            <person name="Gerardy-Schahn R."/>
            <person name="Bakker H."/>
        </authorList>
    </citation>
    <scope>NUCLEOTIDE SEQUENCE [MRNA] (ISOFORM 1)</scope>
    <scope>FUNCTION</scope>
    <scope>TRANSPORT ACTIVITY (ISOFORM 1)</scope>
    <scope>CAUTION</scope>
</reference>
<reference key="2">
    <citation type="submission" date="2000-12" db="EMBL/GenBank/DDBJ databases">
        <title>Molecular cloning of full-length cDNA similar to Yeast Yea4p from human liver cDNA library.</title>
        <authorList>
            <person name="Moriya Y."/>
            <person name="Ito K."/>
            <person name="Aburatani H."/>
            <person name="Suzuki H."/>
            <person name="Sugiyama Y."/>
        </authorList>
    </citation>
    <scope>NUCLEOTIDE SEQUENCE [MRNA] (ISOFORMS 1 AND 2)</scope>
    <source>
        <tissue>Liver</tissue>
    </source>
</reference>
<reference key="3">
    <citation type="submission" date="2001-07" db="EMBL/GenBank/DDBJ databases">
        <title>Molecular cloning and characterisation of human yea4p.</title>
        <authorList>
            <person name="Kobayashi T."/>
            <person name="Burchell B."/>
        </authorList>
    </citation>
    <scope>NUCLEOTIDE SEQUENCE [MRNA] (ISOFORM 1)</scope>
    <source>
        <tissue>Liver</tissue>
    </source>
</reference>
<reference key="4">
    <citation type="journal article" date="2004" name="Nat. Genet.">
        <title>Complete sequencing and characterization of 21,243 full-length human cDNAs.</title>
        <authorList>
            <person name="Ota T."/>
            <person name="Suzuki Y."/>
            <person name="Nishikawa T."/>
            <person name="Otsuki T."/>
            <person name="Sugiyama T."/>
            <person name="Irie R."/>
            <person name="Wakamatsu A."/>
            <person name="Hayashi K."/>
            <person name="Sato H."/>
            <person name="Nagai K."/>
            <person name="Kimura K."/>
            <person name="Makita H."/>
            <person name="Sekine M."/>
            <person name="Obayashi M."/>
            <person name="Nishi T."/>
            <person name="Shibahara T."/>
            <person name="Tanaka T."/>
            <person name="Ishii S."/>
            <person name="Yamamoto J."/>
            <person name="Saito K."/>
            <person name="Kawai Y."/>
            <person name="Isono Y."/>
            <person name="Nakamura Y."/>
            <person name="Nagahari K."/>
            <person name="Murakami K."/>
            <person name="Yasuda T."/>
            <person name="Iwayanagi T."/>
            <person name="Wagatsuma M."/>
            <person name="Shiratori A."/>
            <person name="Sudo H."/>
            <person name="Hosoiri T."/>
            <person name="Kaku Y."/>
            <person name="Kodaira H."/>
            <person name="Kondo H."/>
            <person name="Sugawara M."/>
            <person name="Takahashi M."/>
            <person name="Kanda K."/>
            <person name="Yokoi T."/>
            <person name="Furuya T."/>
            <person name="Kikkawa E."/>
            <person name="Omura Y."/>
            <person name="Abe K."/>
            <person name="Kamihara K."/>
            <person name="Katsuta N."/>
            <person name="Sato K."/>
            <person name="Tanikawa M."/>
            <person name="Yamazaki M."/>
            <person name="Ninomiya K."/>
            <person name="Ishibashi T."/>
            <person name="Yamashita H."/>
            <person name="Murakawa K."/>
            <person name="Fujimori K."/>
            <person name="Tanai H."/>
            <person name="Kimata M."/>
            <person name="Watanabe M."/>
            <person name="Hiraoka S."/>
            <person name="Chiba Y."/>
            <person name="Ishida S."/>
            <person name="Ono Y."/>
            <person name="Takiguchi S."/>
            <person name="Watanabe S."/>
            <person name="Yosida M."/>
            <person name="Hotuta T."/>
            <person name="Kusano J."/>
            <person name="Kanehori K."/>
            <person name="Takahashi-Fujii A."/>
            <person name="Hara H."/>
            <person name="Tanase T.-O."/>
            <person name="Nomura Y."/>
            <person name="Togiya S."/>
            <person name="Komai F."/>
            <person name="Hara R."/>
            <person name="Takeuchi K."/>
            <person name="Arita M."/>
            <person name="Imose N."/>
            <person name="Musashino K."/>
            <person name="Yuuki H."/>
            <person name="Oshima A."/>
            <person name="Sasaki N."/>
            <person name="Aotsuka S."/>
            <person name="Yoshikawa Y."/>
            <person name="Matsunawa H."/>
            <person name="Ichihara T."/>
            <person name="Shiohata N."/>
            <person name="Sano S."/>
            <person name="Moriya S."/>
            <person name="Momiyama H."/>
            <person name="Satoh N."/>
            <person name="Takami S."/>
            <person name="Terashima Y."/>
            <person name="Suzuki O."/>
            <person name="Nakagawa S."/>
            <person name="Senoh A."/>
            <person name="Mizoguchi H."/>
            <person name="Goto Y."/>
            <person name="Shimizu F."/>
            <person name="Wakebe H."/>
            <person name="Hishigaki H."/>
            <person name="Watanabe T."/>
            <person name="Sugiyama A."/>
            <person name="Takemoto M."/>
            <person name="Kawakami B."/>
            <person name="Yamazaki M."/>
            <person name="Watanabe K."/>
            <person name="Kumagai A."/>
            <person name="Itakura S."/>
            <person name="Fukuzumi Y."/>
            <person name="Fujimori Y."/>
            <person name="Komiyama M."/>
            <person name="Tashiro H."/>
            <person name="Tanigami A."/>
            <person name="Fujiwara T."/>
            <person name="Ono T."/>
            <person name="Yamada K."/>
            <person name="Fujii Y."/>
            <person name="Ozaki K."/>
            <person name="Hirao M."/>
            <person name="Ohmori Y."/>
            <person name="Kawabata A."/>
            <person name="Hikiji T."/>
            <person name="Kobatake N."/>
            <person name="Inagaki H."/>
            <person name="Ikema Y."/>
            <person name="Okamoto S."/>
            <person name="Okitani R."/>
            <person name="Kawakami T."/>
            <person name="Noguchi S."/>
            <person name="Itoh T."/>
            <person name="Shigeta K."/>
            <person name="Senba T."/>
            <person name="Matsumura K."/>
            <person name="Nakajima Y."/>
            <person name="Mizuno T."/>
            <person name="Morinaga M."/>
            <person name="Sasaki M."/>
            <person name="Togashi T."/>
            <person name="Oyama M."/>
            <person name="Hata H."/>
            <person name="Watanabe M."/>
            <person name="Komatsu T."/>
            <person name="Mizushima-Sugano J."/>
            <person name="Satoh T."/>
            <person name="Shirai Y."/>
            <person name="Takahashi Y."/>
            <person name="Nakagawa K."/>
            <person name="Okumura K."/>
            <person name="Nagase T."/>
            <person name="Nomura N."/>
            <person name="Kikuchi H."/>
            <person name="Masuho Y."/>
            <person name="Yamashita R."/>
            <person name="Nakai K."/>
            <person name="Yada T."/>
            <person name="Nakamura Y."/>
            <person name="Ohara O."/>
            <person name="Isogai T."/>
            <person name="Sugano S."/>
        </authorList>
    </citation>
    <scope>NUCLEOTIDE SEQUENCE [LARGE SCALE MRNA] (ISOFORM 1)</scope>
    <scope>NUCLEOTIDE SEQUENCE [LARGE SCALE MRNA] OF 41-331 (ISOFORM 3)</scope>
</reference>
<reference key="5">
    <citation type="journal article" date="2005" name="DNA Res.">
        <title>Signal sequence and keyword trap in silico for selection of full-length human cDNAs encoding secretion or membrane proteins from oligo-capped cDNA libraries.</title>
        <authorList>
            <person name="Otsuki T."/>
            <person name="Ota T."/>
            <person name="Nishikawa T."/>
            <person name="Hayashi K."/>
            <person name="Suzuki Y."/>
            <person name="Yamamoto J."/>
            <person name="Wakamatsu A."/>
            <person name="Kimura K."/>
            <person name="Sakamoto K."/>
            <person name="Hatano N."/>
            <person name="Kawai Y."/>
            <person name="Ishii S."/>
            <person name="Saito K."/>
            <person name="Kojima S."/>
            <person name="Sugiyama T."/>
            <person name="Ono T."/>
            <person name="Okano K."/>
            <person name="Yoshikawa Y."/>
            <person name="Aotsuka S."/>
            <person name="Sasaki N."/>
            <person name="Hattori A."/>
            <person name="Okumura K."/>
            <person name="Nagai K."/>
            <person name="Sugano S."/>
            <person name="Isogai T."/>
        </authorList>
    </citation>
    <scope>NUCLEOTIDE SEQUENCE [LARGE SCALE MRNA] (ISOFORM 1)</scope>
    <source>
        <tissue>Teratocarcinoma</tissue>
    </source>
</reference>
<reference key="6">
    <citation type="submission" date="2005-04" db="EMBL/GenBank/DDBJ databases">
        <authorList>
            <person name="Suzuki Y."/>
            <person name="Sugano S."/>
            <person name="Totoki Y."/>
            <person name="Toyoda A."/>
            <person name="Takeda T."/>
            <person name="Sakaki Y."/>
            <person name="Tanaka A."/>
            <person name="Yokoyama S."/>
        </authorList>
    </citation>
    <scope>NUCLEOTIDE SEQUENCE [LARGE SCALE MRNA] (ISOFORM 1)</scope>
    <source>
        <tissue>Liver</tissue>
    </source>
</reference>
<reference key="7">
    <citation type="journal article" date="2003" name="Nature">
        <title>The DNA sequence of human chromosome 7.</title>
        <authorList>
            <person name="Hillier L.W."/>
            <person name="Fulton R.S."/>
            <person name="Fulton L.A."/>
            <person name="Graves T.A."/>
            <person name="Pepin K.H."/>
            <person name="Wagner-McPherson C."/>
            <person name="Layman D."/>
            <person name="Maas J."/>
            <person name="Jaeger S."/>
            <person name="Walker R."/>
            <person name="Wylie K."/>
            <person name="Sekhon M."/>
            <person name="Becker M.C."/>
            <person name="O'Laughlin M.D."/>
            <person name="Schaller M.E."/>
            <person name="Fewell G.A."/>
            <person name="Delehaunty K.D."/>
            <person name="Miner T.L."/>
            <person name="Nash W.E."/>
            <person name="Cordes M."/>
            <person name="Du H."/>
            <person name="Sun H."/>
            <person name="Edwards J."/>
            <person name="Bradshaw-Cordum H."/>
            <person name="Ali J."/>
            <person name="Andrews S."/>
            <person name="Isak A."/>
            <person name="Vanbrunt A."/>
            <person name="Nguyen C."/>
            <person name="Du F."/>
            <person name="Lamar B."/>
            <person name="Courtney L."/>
            <person name="Kalicki J."/>
            <person name="Ozersky P."/>
            <person name="Bielicki L."/>
            <person name="Scott K."/>
            <person name="Holmes A."/>
            <person name="Harkins R."/>
            <person name="Harris A."/>
            <person name="Strong C.M."/>
            <person name="Hou S."/>
            <person name="Tomlinson C."/>
            <person name="Dauphin-Kohlberg S."/>
            <person name="Kozlowicz-Reilly A."/>
            <person name="Leonard S."/>
            <person name="Rohlfing T."/>
            <person name="Rock S.M."/>
            <person name="Tin-Wollam A.-M."/>
            <person name="Abbott A."/>
            <person name="Minx P."/>
            <person name="Maupin R."/>
            <person name="Strowmatt C."/>
            <person name="Latreille P."/>
            <person name="Miller N."/>
            <person name="Johnson D."/>
            <person name="Murray J."/>
            <person name="Woessner J.P."/>
            <person name="Wendl M.C."/>
            <person name="Yang S.-P."/>
            <person name="Schultz B.R."/>
            <person name="Wallis J.W."/>
            <person name="Spieth J."/>
            <person name="Bieri T.A."/>
            <person name="Nelson J.O."/>
            <person name="Berkowicz N."/>
            <person name="Wohldmann P.E."/>
            <person name="Cook L.L."/>
            <person name="Hickenbotham M.T."/>
            <person name="Eldred J."/>
            <person name="Williams D."/>
            <person name="Bedell J.A."/>
            <person name="Mardis E.R."/>
            <person name="Clifton S.W."/>
            <person name="Chissoe S.L."/>
            <person name="Marra M.A."/>
            <person name="Raymond C."/>
            <person name="Haugen E."/>
            <person name="Gillett W."/>
            <person name="Zhou Y."/>
            <person name="James R."/>
            <person name="Phelps K."/>
            <person name="Iadanoto S."/>
            <person name="Bubb K."/>
            <person name="Simms E."/>
            <person name="Levy R."/>
            <person name="Clendenning J."/>
            <person name="Kaul R."/>
            <person name="Kent W.J."/>
            <person name="Furey T.S."/>
            <person name="Baertsch R.A."/>
            <person name="Brent M.R."/>
            <person name="Keibler E."/>
            <person name="Flicek P."/>
            <person name="Bork P."/>
            <person name="Suyama M."/>
            <person name="Bailey J.A."/>
            <person name="Portnoy M.E."/>
            <person name="Torrents D."/>
            <person name="Chinwalla A.T."/>
            <person name="Gish W.R."/>
            <person name="Eddy S.R."/>
            <person name="McPherson J.D."/>
            <person name="Olson M.V."/>
            <person name="Eichler E.E."/>
            <person name="Green E.D."/>
            <person name="Waterston R.H."/>
            <person name="Wilson R.K."/>
        </authorList>
    </citation>
    <scope>NUCLEOTIDE SEQUENCE [LARGE SCALE GENOMIC DNA]</scope>
</reference>
<reference key="8">
    <citation type="journal article" date="2003" name="Science">
        <title>Human chromosome 7: DNA sequence and biology.</title>
        <authorList>
            <person name="Scherer S.W."/>
            <person name="Cheung J."/>
            <person name="MacDonald J.R."/>
            <person name="Osborne L.R."/>
            <person name="Nakabayashi K."/>
            <person name="Herbrick J.-A."/>
            <person name="Carson A.R."/>
            <person name="Parker-Katiraee L."/>
            <person name="Skaug J."/>
            <person name="Khaja R."/>
            <person name="Zhang J."/>
            <person name="Hudek A.K."/>
            <person name="Li M."/>
            <person name="Haddad M."/>
            <person name="Duggan G.E."/>
            <person name="Fernandez B.A."/>
            <person name="Kanematsu E."/>
            <person name="Gentles S."/>
            <person name="Christopoulos C.C."/>
            <person name="Choufani S."/>
            <person name="Kwasnicka D."/>
            <person name="Zheng X.H."/>
            <person name="Lai Z."/>
            <person name="Nusskern D.R."/>
            <person name="Zhang Q."/>
            <person name="Gu Z."/>
            <person name="Lu F."/>
            <person name="Zeesman S."/>
            <person name="Nowaczyk M.J."/>
            <person name="Teshima I."/>
            <person name="Chitayat D."/>
            <person name="Shuman C."/>
            <person name="Weksberg R."/>
            <person name="Zackai E.H."/>
            <person name="Grebe T.A."/>
            <person name="Cox S.R."/>
            <person name="Kirkpatrick S.J."/>
            <person name="Rahman N."/>
            <person name="Friedman J.M."/>
            <person name="Heng H.H.Q."/>
            <person name="Pelicci P.G."/>
            <person name="Lo-Coco F."/>
            <person name="Belloni E."/>
            <person name="Shaffer L.G."/>
            <person name="Pober B."/>
            <person name="Morton C.C."/>
            <person name="Gusella J.F."/>
            <person name="Bruns G.A.P."/>
            <person name="Korf B.R."/>
            <person name="Quade B.J."/>
            <person name="Ligon A.H."/>
            <person name="Ferguson H."/>
            <person name="Higgins A.W."/>
            <person name="Leach N.T."/>
            <person name="Herrick S.R."/>
            <person name="Lemyre E."/>
            <person name="Farra C.G."/>
            <person name="Kim H.-G."/>
            <person name="Summers A.M."/>
            <person name="Gripp K.W."/>
            <person name="Roberts W."/>
            <person name="Szatmari P."/>
            <person name="Winsor E.J.T."/>
            <person name="Grzeschik K.-H."/>
            <person name="Teebi A."/>
            <person name="Minassian B.A."/>
            <person name="Kere J."/>
            <person name="Armengol L."/>
            <person name="Pujana M.A."/>
            <person name="Estivill X."/>
            <person name="Wilson M.D."/>
            <person name="Koop B.F."/>
            <person name="Tosi S."/>
            <person name="Moore G.E."/>
            <person name="Boright A.P."/>
            <person name="Zlotorynski E."/>
            <person name="Kerem B."/>
            <person name="Kroisel P.M."/>
            <person name="Petek E."/>
            <person name="Oscier D.G."/>
            <person name="Mould S.J."/>
            <person name="Doehner H."/>
            <person name="Doehner K."/>
            <person name="Rommens J.M."/>
            <person name="Vincent J.B."/>
            <person name="Venter J.C."/>
            <person name="Li P.W."/>
            <person name="Mural R.J."/>
            <person name="Adams M.D."/>
            <person name="Tsui L.-C."/>
        </authorList>
    </citation>
    <scope>NUCLEOTIDE SEQUENCE [LARGE SCALE GENOMIC DNA]</scope>
</reference>
<reference key="9">
    <citation type="submission" date="2005-07" db="EMBL/GenBank/DDBJ databases">
        <authorList>
            <person name="Mural R.J."/>
            <person name="Istrail S."/>
            <person name="Sutton G.G."/>
            <person name="Florea L."/>
            <person name="Halpern A.L."/>
            <person name="Mobarry C.M."/>
            <person name="Lippert R."/>
            <person name="Walenz B."/>
            <person name="Shatkay H."/>
            <person name="Dew I."/>
            <person name="Miller J.R."/>
            <person name="Flanigan M.J."/>
            <person name="Edwards N.J."/>
            <person name="Bolanos R."/>
            <person name="Fasulo D."/>
            <person name="Halldorsson B.V."/>
            <person name="Hannenhalli S."/>
            <person name="Turner R."/>
            <person name="Yooseph S."/>
            <person name="Lu F."/>
            <person name="Nusskern D.R."/>
            <person name="Shue B.C."/>
            <person name="Zheng X.H."/>
            <person name="Zhong F."/>
            <person name="Delcher A.L."/>
            <person name="Huson D.H."/>
            <person name="Kravitz S.A."/>
            <person name="Mouchard L."/>
            <person name="Reinert K."/>
            <person name="Remington K.A."/>
            <person name="Clark A.G."/>
            <person name="Waterman M.S."/>
            <person name="Eichler E.E."/>
            <person name="Adams M.D."/>
            <person name="Hunkapiller M.W."/>
            <person name="Myers E.W."/>
            <person name="Venter J.C."/>
        </authorList>
    </citation>
    <scope>NUCLEOTIDE SEQUENCE [LARGE SCALE GENOMIC DNA]</scope>
</reference>
<reference key="10">
    <citation type="journal article" date="2004" name="Genome Res.">
        <title>The status, quality, and expansion of the NIH full-length cDNA project: the Mammalian Gene Collection (MGC).</title>
        <authorList>
            <consortium name="The MGC Project Team"/>
        </authorList>
    </citation>
    <scope>NUCLEOTIDE SEQUENCE [LARGE SCALE MRNA] (ISOFORM 1)</scope>
    <source>
        <tissue>Skin</tissue>
    </source>
</reference>
<reference key="11">
    <citation type="journal article" date="2018" name="PLoS ONE">
        <title>Lysine at position 329 within a C-terminal dilysine motif is crucial for the ER localization of human SLC35B4.</title>
        <authorList>
            <person name="Bazan B."/>
            <person name="Wiktor M."/>
            <person name="Maszczak-Seneczko D."/>
            <person name="Olczak T."/>
            <person name="Kaczmarek B."/>
            <person name="Olczak M."/>
        </authorList>
    </citation>
    <scope>SUBCELLULAR LOCATION</scope>
    <scope>MOTIF</scope>
    <scope>MUTAGENESIS OF LYS-329 AND LYS-330</scope>
    <scope>CAUTION</scope>
</reference>
<reference key="12">
    <citation type="journal article" date="2006" name="Biochem. J.">
        <title>Molecular and functional characterization of microsomal UDP-glucuronic acid uptake by members of the nucleotide sugar transporter (NST) family.</title>
        <authorList>
            <person name="Kobayashi T."/>
            <person name="Sleeman J.E."/>
            <person name="Coughtrie M.W."/>
            <person name="Burchell B."/>
        </authorList>
    </citation>
    <scope>FUNCTION (ISOFORMS 1 AND 2)</scope>
    <scope>TRANSPORT ACTIVITY (ISOFORMS 1 AND 2)</scope>
</reference>
<organism>
    <name type="scientific">Homo sapiens</name>
    <name type="common">Human</name>
    <dbReference type="NCBI Taxonomy" id="9606"/>
    <lineage>
        <taxon>Eukaryota</taxon>
        <taxon>Metazoa</taxon>
        <taxon>Chordata</taxon>
        <taxon>Craniata</taxon>
        <taxon>Vertebrata</taxon>
        <taxon>Euteleostomi</taxon>
        <taxon>Mammalia</taxon>
        <taxon>Eutheria</taxon>
        <taxon>Euarchontoglires</taxon>
        <taxon>Primates</taxon>
        <taxon>Haplorrhini</taxon>
        <taxon>Catarrhini</taxon>
        <taxon>Hominidae</taxon>
        <taxon>Homo</taxon>
    </lineage>
</organism>
<protein>
    <recommendedName>
        <fullName>Nucleotide sugar transporter SLC35B4</fullName>
    </recommendedName>
    <alternativeName>
        <fullName>Solute carrier family 35 member B4</fullName>
    </alternativeName>
    <alternativeName>
        <fullName>UDP-xylose and UDP-N-acetylglucosamine transporter</fullName>
    </alternativeName>
    <alternativeName>
        <fullName>YEA4 homolog</fullName>
    </alternativeName>
</protein>
<gene>
    <name type="primary">SLC35B4</name>
    <name type="synonym">YEA4</name>
    <name type="ORF">PSEC0055</name>
</gene>